<accession>P94593</accession>
<accession>P96713</accession>
<accession>Q798L9</accession>
<reference key="1">
    <citation type="journal article" date="1997" name="Nature">
        <title>The complete genome sequence of the Gram-positive bacterium Bacillus subtilis.</title>
        <authorList>
            <person name="Kunst F."/>
            <person name="Ogasawara N."/>
            <person name="Moszer I."/>
            <person name="Albertini A.M."/>
            <person name="Alloni G."/>
            <person name="Azevedo V."/>
            <person name="Bertero M.G."/>
            <person name="Bessieres P."/>
            <person name="Bolotin A."/>
            <person name="Borchert S."/>
            <person name="Borriss R."/>
            <person name="Boursier L."/>
            <person name="Brans A."/>
            <person name="Braun M."/>
            <person name="Brignell S.C."/>
            <person name="Bron S."/>
            <person name="Brouillet S."/>
            <person name="Bruschi C.V."/>
            <person name="Caldwell B."/>
            <person name="Capuano V."/>
            <person name="Carter N.M."/>
            <person name="Choi S.-K."/>
            <person name="Codani J.-J."/>
            <person name="Connerton I.F."/>
            <person name="Cummings N.J."/>
            <person name="Daniel R.A."/>
            <person name="Denizot F."/>
            <person name="Devine K.M."/>
            <person name="Duesterhoeft A."/>
            <person name="Ehrlich S.D."/>
            <person name="Emmerson P.T."/>
            <person name="Entian K.-D."/>
            <person name="Errington J."/>
            <person name="Fabret C."/>
            <person name="Ferrari E."/>
            <person name="Foulger D."/>
            <person name="Fritz C."/>
            <person name="Fujita M."/>
            <person name="Fujita Y."/>
            <person name="Fuma S."/>
            <person name="Galizzi A."/>
            <person name="Galleron N."/>
            <person name="Ghim S.-Y."/>
            <person name="Glaser P."/>
            <person name="Goffeau A."/>
            <person name="Golightly E.J."/>
            <person name="Grandi G."/>
            <person name="Guiseppi G."/>
            <person name="Guy B.J."/>
            <person name="Haga K."/>
            <person name="Haiech J."/>
            <person name="Harwood C.R."/>
            <person name="Henaut A."/>
            <person name="Hilbert H."/>
            <person name="Holsappel S."/>
            <person name="Hosono S."/>
            <person name="Hullo M.-F."/>
            <person name="Itaya M."/>
            <person name="Jones L.-M."/>
            <person name="Joris B."/>
            <person name="Karamata D."/>
            <person name="Kasahara Y."/>
            <person name="Klaerr-Blanchard M."/>
            <person name="Klein C."/>
            <person name="Kobayashi Y."/>
            <person name="Koetter P."/>
            <person name="Koningstein G."/>
            <person name="Krogh S."/>
            <person name="Kumano M."/>
            <person name="Kurita K."/>
            <person name="Lapidus A."/>
            <person name="Lardinois S."/>
            <person name="Lauber J."/>
            <person name="Lazarevic V."/>
            <person name="Lee S.-M."/>
            <person name="Levine A."/>
            <person name="Liu H."/>
            <person name="Masuda S."/>
            <person name="Mauel C."/>
            <person name="Medigue C."/>
            <person name="Medina N."/>
            <person name="Mellado R.P."/>
            <person name="Mizuno M."/>
            <person name="Moestl D."/>
            <person name="Nakai S."/>
            <person name="Noback M."/>
            <person name="Noone D."/>
            <person name="O'Reilly M."/>
            <person name="Ogawa K."/>
            <person name="Ogiwara A."/>
            <person name="Oudega B."/>
            <person name="Park S.-H."/>
            <person name="Parro V."/>
            <person name="Pohl T.M."/>
            <person name="Portetelle D."/>
            <person name="Porwollik S."/>
            <person name="Prescott A.M."/>
            <person name="Presecan E."/>
            <person name="Pujic P."/>
            <person name="Purnelle B."/>
            <person name="Rapoport G."/>
            <person name="Rey M."/>
            <person name="Reynolds S."/>
            <person name="Rieger M."/>
            <person name="Rivolta C."/>
            <person name="Rocha E."/>
            <person name="Roche B."/>
            <person name="Rose M."/>
            <person name="Sadaie Y."/>
            <person name="Sato T."/>
            <person name="Scanlan E."/>
            <person name="Schleich S."/>
            <person name="Schroeter R."/>
            <person name="Scoffone F."/>
            <person name="Sekiguchi J."/>
            <person name="Sekowska A."/>
            <person name="Seror S.J."/>
            <person name="Serror P."/>
            <person name="Shin B.-S."/>
            <person name="Soldo B."/>
            <person name="Sorokin A."/>
            <person name="Tacconi E."/>
            <person name="Takagi T."/>
            <person name="Takahashi H."/>
            <person name="Takemaru K."/>
            <person name="Takeuchi M."/>
            <person name="Tamakoshi A."/>
            <person name="Tanaka T."/>
            <person name="Terpstra P."/>
            <person name="Tognoni A."/>
            <person name="Tosato V."/>
            <person name="Uchiyama S."/>
            <person name="Vandenbol M."/>
            <person name="Vannier F."/>
            <person name="Vassarotti A."/>
            <person name="Viari A."/>
            <person name="Wambutt R."/>
            <person name="Wedler E."/>
            <person name="Wedler H."/>
            <person name="Weitzenegger T."/>
            <person name="Winters P."/>
            <person name="Wipat A."/>
            <person name="Yamamoto H."/>
            <person name="Yamane K."/>
            <person name="Yasumoto K."/>
            <person name="Yata K."/>
            <person name="Yoshida K."/>
            <person name="Yoshikawa H.-F."/>
            <person name="Zumstein E."/>
            <person name="Yoshikawa H."/>
            <person name="Danchin A."/>
        </authorList>
    </citation>
    <scope>NUCLEOTIDE SEQUENCE [LARGE SCALE GENOMIC DNA]</scope>
    <source>
        <strain>168</strain>
    </source>
</reference>
<reference key="2">
    <citation type="journal article" date="1997" name="Microbiology">
        <title>The Bacillus subtilis genome from gerBC (311 degrees) to licR (334 degrees).</title>
        <authorList>
            <person name="Presecan E."/>
            <person name="Moszer I."/>
            <person name="Boursier L."/>
            <person name="Cruz Ramos H."/>
            <person name="De La Fuente V."/>
            <person name="Hullo M.-F."/>
            <person name="Lelong C."/>
            <person name="Schleich S."/>
            <person name="Sekowska A."/>
            <person name="Song B.H."/>
            <person name="Villani G."/>
            <person name="Kunst F."/>
            <person name="Danchin A."/>
            <person name="Glaser P."/>
        </authorList>
    </citation>
    <scope>NUCLEOTIDE SEQUENCE [GENOMIC DNA] OF 56-922</scope>
    <source>
        <strain>168</strain>
    </source>
</reference>
<reference key="3">
    <citation type="journal article" date="2011" name="Proteomics">
        <title>The dynamic protein partnership of RNA polymerase in Bacillus subtilis.</title>
        <authorList>
            <person name="Delumeau O."/>
            <person name="Lecointe F."/>
            <person name="Muntel J."/>
            <person name="Guillot A."/>
            <person name="Guedon E."/>
            <person name="Monnet V."/>
            <person name="Hecker M."/>
            <person name="Becher D."/>
            <person name="Polard P."/>
            <person name="Noirot P."/>
        </authorList>
    </citation>
    <scope>SUBUNIT</scope>
    <source>
        <strain>168</strain>
    </source>
</reference>
<reference key="4">
    <citation type="journal article" date="2020" name="Front. Mol. Biosci.">
        <title>Bacillus subtilis PcrA Couples DNA Replication, Transcription, Recombination and Segregation.</title>
        <authorList>
            <person name="Moreno-Del Alamo M."/>
            <person name="Torres R."/>
            <person name="Manfredi C."/>
            <person name="Ruiz-Maso J.A."/>
            <person name="Del Solar G."/>
            <person name="Alonso J.C."/>
        </authorList>
    </citation>
    <scope>DISRUPTION PHENOTYPE</scope>
    <source>
        <strain>168 / YB886 / BG214</strain>
    </source>
</reference>
<comment type="subunit">
    <text evidence="3">Interacts with the RNA polymerase core.</text>
</comment>
<comment type="disruption phenotype">
    <text evidence="4">No visible phenotype in presence or absence of DNA damaging agents H(2)O(2) or methyl methanesulfonate (MMS); a double ywqA deletion-pcrA depletion strain has 8-fold reduced cell viability.</text>
</comment>
<comment type="similarity">
    <text evidence="5">Belongs to the SNF2/RAD54 helicase family.</text>
</comment>
<sequence>MASLKEILIHVEQMEDGSFTLSAFDENEQPLPYSHMKKHLFQWHESSFYGTFLEDVSFIGTTAVLLSPWMTVELLGKNSFNSFSSVQLTEETEPLIEAASTIYEFIADGDFMPDYDAWTNGVFRWKDRDNILEGFTAEWFSAAVQDYIQYDDDLREKWEHIKEKSPAVTTFRGHFLDEEDFLEGIGWIDDQSPFTVGLRLNEPDFDGDEWKIEMFLRDKKSGAVEFFDGLKSLKKSWQAYSDKIAREQDRFHRTVPWLSFDSGTTLISEEEAWIFLSEASETLVDMGVEILLPSWWQIVRDSNMMLKAKVSSSPRGESFVGMNALLDFNWRFATNGIELTEAEFNELVASNRRLVNIRGQWVKIDPQFIKQMKRLMEKAESEGLHMSDILARELMDQQDGGLEDSDLIDTSAFAGIQFDLSKQLRSLIRKLTAAENLPEHKVSPSFKGTLRPYQKYGMNWLLFLRESGFGACLADDMGLGKTIQMIAYFLHVKESGRQKTPHLIIAPTSVLGNWQRELQTFAPDLSVALHYGPRRPKGDDFAAHYENADVVLTSYGLSHADTEELSSVTWNTICLDEAQNIKNAHTKQSRAIRKLKGLHHIALSGTPMENRLTELWSIFDFMNKGYLGSLTGFHKRYVLPIEKDRDEKRIGQLQQLIRPFLLRRTKRDEEVALNLPEKLEEKEFIPLSAEQASLYEQLVKDTFDHMTSLTGMQRKALILSMLGRLKQICDHPALYLKEEQTELLAGRSVKLEKLLELMTAIRAQNESCLIFTQYIQMGNMMKRLLEKTFGEPVQFLNGSLSKQERDTLVEKFQRKEYPTLILSLKAGGTGLNLTAANHVIHYDRWWNPAVENQATDRAYRIGQERFVHVHKMITTGTIEEKIDVMLESKQTLNDQIIQSENWITELSTQELEELFTLSATAQ</sequence>
<keyword id="KW-0067">ATP-binding</keyword>
<keyword id="KW-0347">Helicase</keyword>
<keyword id="KW-0378">Hydrolase</keyword>
<keyword id="KW-0547">Nucleotide-binding</keyword>
<keyword id="KW-1185">Reference proteome</keyword>
<name>YWQA_BACSU</name>
<dbReference type="EC" id="3.6.4.-"/>
<dbReference type="EMBL" id="AL009126">
    <property type="protein sequence ID" value="CAB15645.1"/>
    <property type="molecule type" value="Genomic_DNA"/>
</dbReference>
<dbReference type="EMBL" id="Z83337">
    <property type="protein sequence ID" value="CAB05939.1"/>
    <property type="molecule type" value="Genomic_DNA"/>
</dbReference>
<dbReference type="PIR" id="D70066">
    <property type="entry name" value="D70066"/>
</dbReference>
<dbReference type="RefSeq" id="WP_003227803.1">
    <property type="nucleotide sequence ID" value="NZ_OZ025638.1"/>
</dbReference>
<dbReference type="SMR" id="P94593"/>
<dbReference type="FunCoup" id="P94593">
    <property type="interactions" value="439"/>
</dbReference>
<dbReference type="STRING" id="224308.BSU36280"/>
<dbReference type="PaxDb" id="224308-BSU36280"/>
<dbReference type="EnsemblBacteria" id="CAB15645">
    <property type="protein sequence ID" value="CAB15645"/>
    <property type="gene ID" value="BSU_36280"/>
</dbReference>
<dbReference type="GeneID" id="936906"/>
<dbReference type="KEGG" id="bsu:BSU36280"/>
<dbReference type="PATRIC" id="fig|224308.179.peg.3927"/>
<dbReference type="eggNOG" id="COG0553">
    <property type="taxonomic scope" value="Bacteria"/>
</dbReference>
<dbReference type="InParanoid" id="P94593"/>
<dbReference type="OrthoDB" id="9760715at2"/>
<dbReference type="PhylomeDB" id="P94593"/>
<dbReference type="BioCyc" id="BSUB:BSU36280-MONOMER"/>
<dbReference type="Proteomes" id="UP000001570">
    <property type="component" value="Chromosome"/>
</dbReference>
<dbReference type="GO" id="GO:0005524">
    <property type="term" value="F:ATP binding"/>
    <property type="evidence" value="ECO:0007669"/>
    <property type="project" value="UniProtKB-KW"/>
</dbReference>
<dbReference type="GO" id="GO:0003682">
    <property type="term" value="F:chromatin binding"/>
    <property type="evidence" value="ECO:0000318"/>
    <property type="project" value="GO_Central"/>
</dbReference>
<dbReference type="GO" id="GO:0003677">
    <property type="term" value="F:DNA binding"/>
    <property type="evidence" value="ECO:0000318"/>
    <property type="project" value="GO_Central"/>
</dbReference>
<dbReference type="GO" id="GO:0004386">
    <property type="term" value="F:helicase activity"/>
    <property type="evidence" value="ECO:0007669"/>
    <property type="project" value="UniProtKB-KW"/>
</dbReference>
<dbReference type="GO" id="GO:0016787">
    <property type="term" value="F:hydrolase activity"/>
    <property type="evidence" value="ECO:0007669"/>
    <property type="project" value="UniProtKB-KW"/>
</dbReference>
<dbReference type="GO" id="GO:0140750">
    <property type="term" value="F:nucleosome array spacer activity"/>
    <property type="evidence" value="ECO:0000318"/>
    <property type="project" value="GO_Central"/>
</dbReference>
<dbReference type="GO" id="GO:0045944">
    <property type="term" value="P:positive regulation of transcription by RNA polymerase II"/>
    <property type="evidence" value="ECO:0000318"/>
    <property type="project" value="GO_Central"/>
</dbReference>
<dbReference type="CDD" id="cd18012">
    <property type="entry name" value="DEXQc_arch_SWI2_SNF2"/>
    <property type="match status" value="1"/>
</dbReference>
<dbReference type="CDD" id="cd18793">
    <property type="entry name" value="SF2_C_SNF"/>
    <property type="match status" value="1"/>
</dbReference>
<dbReference type="FunFam" id="3.40.50.300:FF:000533">
    <property type="entry name" value="Helicase, Snf2 family"/>
    <property type="match status" value="1"/>
</dbReference>
<dbReference type="FunFam" id="3.40.50.10810:FF:000057">
    <property type="entry name" value="Snf2/Rad54 family helicase"/>
    <property type="match status" value="1"/>
</dbReference>
<dbReference type="Gene3D" id="3.40.50.300">
    <property type="entry name" value="P-loop containing nucleotide triphosphate hydrolases"/>
    <property type="match status" value="1"/>
</dbReference>
<dbReference type="Gene3D" id="3.40.50.10810">
    <property type="entry name" value="Tandem AAA-ATPase domain"/>
    <property type="match status" value="1"/>
</dbReference>
<dbReference type="InterPro" id="IPR014001">
    <property type="entry name" value="Helicase_ATP-bd"/>
</dbReference>
<dbReference type="InterPro" id="IPR001650">
    <property type="entry name" value="Helicase_C-like"/>
</dbReference>
<dbReference type="InterPro" id="IPR022138">
    <property type="entry name" value="Helicase_SWF/SNF-rel"/>
</dbReference>
<dbReference type="InterPro" id="IPR027417">
    <property type="entry name" value="P-loop_NTPase"/>
</dbReference>
<dbReference type="InterPro" id="IPR038718">
    <property type="entry name" value="SNF2-like_sf"/>
</dbReference>
<dbReference type="InterPro" id="IPR049730">
    <property type="entry name" value="SNF2/RAD54-like_C"/>
</dbReference>
<dbReference type="InterPro" id="IPR000330">
    <property type="entry name" value="SNF2_N"/>
</dbReference>
<dbReference type="PANTHER" id="PTHR10799">
    <property type="entry name" value="SNF2/RAD54 HELICASE FAMILY"/>
    <property type="match status" value="1"/>
</dbReference>
<dbReference type="Pfam" id="PF12419">
    <property type="entry name" value="DUF3670"/>
    <property type="match status" value="1"/>
</dbReference>
<dbReference type="Pfam" id="PF00271">
    <property type="entry name" value="Helicase_C"/>
    <property type="match status" value="1"/>
</dbReference>
<dbReference type="Pfam" id="PF00176">
    <property type="entry name" value="SNF2-rel_dom"/>
    <property type="match status" value="1"/>
</dbReference>
<dbReference type="SMART" id="SM00487">
    <property type="entry name" value="DEXDc"/>
    <property type="match status" value="1"/>
</dbReference>
<dbReference type="SMART" id="SM00490">
    <property type="entry name" value="HELICc"/>
    <property type="match status" value="1"/>
</dbReference>
<dbReference type="SUPFAM" id="SSF52540">
    <property type="entry name" value="P-loop containing nucleoside triphosphate hydrolases"/>
    <property type="match status" value="2"/>
</dbReference>
<dbReference type="PROSITE" id="PS51192">
    <property type="entry name" value="HELICASE_ATP_BIND_1"/>
    <property type="match status" value="1"/>
</dbReference>
<dbReference type="PROSITE" id="PS51194">
    <property type="entry name" value="HELICASE_CTER"/>
    <property type="match status" value="1"/>
</dbReference>
<protein>
    <recommendedName>
        <fullName evidence="5">Putative ATP-dependent helicase/translocase YwqA</fullName>
        <ecNumber>3.6.4.-</ecNumber>
    </recommendedName>
</protein>
<feature type="chain" id="PRO_0000388352" description="Putative ATP-dependent helicase/translocase YwqA">
    <location>
        <begin position="1"/>
        <end position="922"/>
    </location>
</feature>
<feature type="domain" description="Helicase ATP-binding" evidence="1">
    <location>
        <begin position="462"/>
        <end position="625"/>
    </location>
</feature>
<feature type="domain" description="Helicase C-terminal" evidence="2">
    <location>
        <begin position="753"/>
        <end position="907"/>
    </location>
</feature>
<feature type="short sequence motif" description="DEAQ box">
    <location>
        <begin position="576"/>
        <end position="579"/>
    </location>
</feature>
<feature type="binding site" evidence="1">
    <location>
        <begin position="475"/>
        <end position="482"/>
    </location>
    <ligand>
        <name>ATP</name>
        <dbReference type="ChEBI" id="CHEBI:30616"/>
    </ligand>
</feature>
<proteinExistence type="evidence at protein level"/>
<organism>
    <name type="scientific">Bacillus subtilis (strain 168)</name>
    <dbReference type="NCBI Taxonomy" id="224308"/>
    <lineage>
        <taxon>Bacteria</taxon>
        <taxon>Bacillati</taxon>
        <taxon>Bacillota</taxon>
        <taxon>Bacilli</taxon>
        <taxon>Bacillales</taxon>
        <taxon>Bacillaceae</taxon>
        <taxon>Bacillus</taxon>
    </lineage>
</organism>
<evidence type="ECO:0000255" key="1">
    <source>
        <dbReference type="PROSITE-ProRule" id="PRU00541"/>
    </source>
</evidence>
<evidence type="ECO:0000255" key="2">
    <source>
        <dbReference type="PROSITE-ProRule" id="PRU00542"/>
    </source>
</evidence>
<evidence type="ECO:0000269" key="3">
    <source>
    </source>
</evidence>
<evidence type="ECO:0000269" key="4">
    <source>
    </source>
</evidence>
<evidence type="ECO:0000305" key="5"/>
<gene>
    <name type="primary">ywqA</name>
    <name type="ordered locus">BSU36280</name>
</gene>